<protein>
    <recommendedName>
        <fullName evidence="1">Methionine import ATP-binding protein MetN</fullName>
        <ecNumber evidence="1">7.4.2.11</ecNumber>
    </recommendedName>
</protein>
<reference key="1">
    <citation type="journal article" date="2011" name="Stand. Genomic Sci.">
        <title>Complete genome sequence of the halophilic and highly halotolerant Chromohalobacter salexigens type strain (1H11(T)).</title>
        <authorList>
            <person name="Copeland A."/>
            <person name="O'Connor K."/>
            <person name="Lucas S."/>
            <person name="Lapidus A."/>
            <person name="Berry K.W."/>
            <person name="Detter J.C."/>
            <person name="Del Rio T.G."/>
            <person name="Hammon N."/>
            <person name="Dalin E."/>
            <person name="Tice H."/>
            <person name="Pitluck S."/>
            <person name="Bruce D."/>
            <person name="Goodwin L."/>
            <person name="Han C."/>
            <person name="Tapia R."/>
            <person name="Saunders E."/>
            <person name="Schmutz J."/>
            <person name="Brettin T."/>
            <person name="Larimer F."/>
            <person name="Land M."/>
            <person name="Hauser L."/>
            <person name="Vargas C."/>
            <person name="Nieto J.J."/>
            <person name="Kyrpides N.C."/>
            <person name="Ivanova N."/>
            <person name="Goker M."/>
            <person name="Klenk H.P."/>
            <person name="Csonka L.N."/>
            <person name="Woyke T."/>
        </authorList>
    </citation>
    <scope>NUCLEOTIDE SEQUENCE [LARGE SCALE GENOMIC DNA]</scope>
    <source>
        <strain>ATCC BAA-138 / DSM 3043 / CIP 106854 / NCIMB 13768 / 1H11</strain>
    </source>
</reference>
<dbReference type="EC" id="7.4.2.11" evidence="1"/>
<dbReference type="EMBL" id="CP000285">
    <property type="protein sequence ID" value="ABE59451.1"/>
    <property type="molecule type" value="Genomic_DNA"/>
</dbReference>
<dbReference type="RefSeq" id="WP_011507397.1">
    <property type="nucleotide sequence ID" value="NC_007963.1"/>
</dbReference>
<dbReference type="SMR" id="Q1QVQ7"/>
<dbReference type="STRING" id="290398.Csal_2100"/>
<dbReference type="GeneID" id="95334815"/>
<dbReference type="KEGG" id="csa:Csal_2100"/>
<dbReference type="eggNOG" id="COG1135">
    <property type="taxonomic scope" value="Bacteria"/>
</dbReference>
<dbReference type="HOGENOM" id="CLU_000604_1_3_6"/>
<dbReference type="OrthoDB" id="9802264at2"/>
<dbReference type="Proteomes" id="UP000000239">
    <property type="component" value="Chromosome"/>
</dbReference>
<dbReference type="GO" id="GO:0005886">
    <property type="term" value="C:plasma membrane"/>
    <property type="evidence" value="ECO:0007669"/>
    <property type="project" value="UniProtKB-SubCell"/>
</dbReference>
<dbReference type="GO" id="GO:0033232">
    <property type="term" value="F:ABC-type D-methionine transporter activity"/>
    <property type="evidence" value="ECO:0007669"/>
    <property type="project" value="UniProtKB-EC"/>
</dbReference>
<dbReference type="GO" id="GO:0005524">
    <property type="term" value="F:ATP binding"/>
    <property type="evidence" value="ECO:0007669"/>
    <property type="project" value="UniProtKB-KW"/>
</dbReference>
<dbReference type="GO" id="GO:0016887">
    <property type="term" value="F:ATP hydrolysis activity"/>
    <property type="evidence" value="ECO:0007669"/>
    <property type="project" value="InterPro"/>
</dbReference>
<dbReference type="CDD" id="cd03258">
    <property type="entry name" value="ABC_MetN_methionine_transporter"/>
    <property type="match status" value="1"/>
</dbReference>
<dbReference type="FunFam" id="3.40.50.300:FF:000056">
    <property type="entry name" value="Cell division ATP-binding protein FtsE"/>
    <property type="match status" value="1"/>
</dbReference>
<dbReference type="Gene3D" id="3.30.70.260">
    <property type="match status" value="1"/>
</dbReference>
<dbReference type="Gene3D" id="3.40.50.300">
    <property type="entry name" value="P-loop containing nucleotide triphosphate hydrolases"/>
    <property type="match status" value="1"/>
</dbReference>
<dbReference type="InterPro" id="IPR003593">
    <property type="entry name" value="AAA+_ATPase"/>
</dbReference>
<dbReference type="InterPro" id="IPR003439">
    <property type="entry name" value="ABC_transporter-like_ATP-bd"/>
</dbReference>
<dbReference type="InterPro" id="IPR017871">
    <property type="entry name" value="ABC_transporter-like_CS"/>
</dbReference>
<dbReference type="InterPro" id="IPR045865">
    <property type="entry name" value="ACT-like_dom_sf"/>
</dbReference>
<dbReference type="InterPro" id="IPR041701">
    <property type="entry name" value="MetN_ABC"/>
</dbReference>
<dbReference type="InterPro" id="IPR050086">
    <property type="entry name" value="MetN_ABC_transporter-like"/>
</dbReference>
<dbReference type="InterPro" id="IPR018449">
    <property type="entry name" value="NIL_domain"/>
</dbReference>
<dbReference type="InterPro" id="IPR027417">
    <property type="entry name" value="P-loop_NTPase"/>
</dbReference>
<dbReference type="PANTHER" id="PTHR43166">
    <property type="entry name" value="AMINO ACID IMPORT ATP-BINDING PROTEIN"/>
    <property type="match status" value="1"/>
</dbReference>
<dbReference type="PANTHER" id="PTHR43166:SF30">
    <property type="entry name" value="METHIONINE IMPORT ATP-BINDING PROTEIN METN"/>
    <property type="match status" value="1"/>
</dbReference>
<dbReference type="Pfam" id="PF00005">
    <property type="entry name" value="ABC_tran"/>
    <property type="match status" value="1"/>
</dbReference>
<dbReference type="Pfam" id="PF09383">
    <property type="entry name" value="NIL"/>
    <property type="match status" value="1"/>
</dbReference>
<dbReference type="SMART" id="SM00382">
    <property type="entry name" value="AAA"/>
    <property type="match status" value="1"/>
</dbReference>
<dbReference type="SMART" id="SM00930">
    <property type="entry name" value="NIL"/>
    <property type="match status" value="1"/>
</dbReference>
<dbReference type="SUPFAM" id="SSF55021">
    <property type="entry name" value="ACT-like"/>
    <property type="match status" value="1"/>
</dbReference>
<dbReference type="SUPFAM" id="SSF52540">
    <property type="entry name" value="P-loop containing nucleoside triphosphate hydrolases"/>
    <property type="match status" value="1"/>
</dbReference>
<dbReference type="PROSITE" id="PS00211">
    <property type="entry name" value="ABC_TRANSPORTER_1"/>
    <property type="match status" value="1"/>
</dbReference>
<dbReference type="PROSITE" id="PS50893">
    <property type="entry name" value="ABC_TRANSPORTER_2"/>
    <property type="match status" value="1"/>
</dbReference>
<dbReference type="PROSITE" id="PS51264">
    <property type="entry name" value="METN"/>
    <property type="match status" value="1"/>
</dbReference>
<name>METN_CHRSD</name>
<sequence length="347" mass="37445">MIKLEGVSKTYGAGPTAVHALKNIDLDVPQGAIHGVIGLSGAGKSTLIRCVNLLERPTSGRVIVDGQDLTRQDAEALRQSRHQLGMIFQHFNLLASRTVFDNVALPLELMGVSKSDIRERVEPLLDLTGLTDKARQYPAQLSGGQKQRVAIARALASRPKVLLCDEATSALDPQTTASILELLQDINRKLGLTILLITHEMEVVKSICHRVGLISDGELVEEADVGDFFTAPATRLGRDFLNAFLELEPPQALVERLEETAGPHTHPVVRLAFSGATVATPLISRLARDSGVDVSILQAKVESIQGRTLGLMIAELIGSPDTTSRALTQLEAHDINVEVLGHVQRDA</sequence>
<gene>
    <name evidence="1" type="primary">metN</name>
    <name type="ordered locus">Csal_2100</name>
</gene>
<keyword id="KW-0029">Amino-acid transport</keyword>
<keyword id="KW-0067">ATP-binding</keyword>
<keyword id="KW-0997">Cell inner membrane</keyword>
<keyword id="KW-1003">Cell membrane</keyword>
<keyword id="KW-0472">Membrane</keyword>
<keyword id="KW-0547">Nucleotide-binding</keyword>
<keyword id="KW-1185">Reference proteome</keyword>
<keyword id="KW-1278">Translocase</keyword>
<keyword id="KW-0813">Transport</keyword>
<organism>
    <name type="scientific">Chromohalobacter salexigens (strain ATCC BAA-138 / DSM 3043 / CIP 106854 / NCIMB 13768 / 1H11)</name>
    <dbReference type="NCBI Taxonomy" id="290398"/>
    <lineage>
        <taxon>Bacteria</taxon>
        <taxon>Pseudomonadati</taxon>
        <taxon>Pseudomonadota</taxon>
        <taxon>Gammaproteobacteria</taxon>
        <taxon>Oceanospirillales</taxon>
        <taxon>Halomonadaceae</taxon>
        <taxon>Chromohalobacter</taxon>
    </lineage>
</organism>
<feature type="chain" id="PRO_0000270282" description="Methionine import ATP-binding protein MetN">
    <location>
        <begin position="1"/>
        <end position="347"/>
    </location>
</feature>
<feature type="domain" description="ABC transporter" evidence="1">
    <location>
        <begin position="2"/>
        <end position="241"/>
    </location>
</feature>
<feature type="binding site" evidence="1">
    <location>
        <begin position="38"/>
        <end position="45"/>
    </location>
    <ligand>
        <name>ATP</name>
        <dbReference type="ChEBI" id="CHEBI:30616"/>
    </ligand>
</feature>
<accession>Q1QVQ7</accession>
<proteinExistence type="inferred from homology"/>
<comment type="function">
    <text evidence="1">Part of the ABC transporter complex MetNIQ involved in methionine import. Responsible for energy coupling to the transport system.</text>
</comment>
<comment type="catalytic activity">
    <reaction evidence="1">
        <text>L-methionine(out) + ATP + H2O = L-methionine(in) + ADP + phosphate + H(+)</text>
        <dbReference type="Rhea" id="RHEA:29779"/>
        <dbReference type="ChEBI" id="CHEBI:15377"/>
        <dbReference type="ChEBI" id="CHEBI:15378"/>
        <dbReference type="ChEBI" id="CHEBI:30616"/>
        <dbReference type="ChEBI" id="CHEBI:43474"/>
        <dbReference type="ChEBI" id="CHEBI:57844"/>
        <dbReference type="ChEBI" id="CHEBI:456216"/>
        <dbReference type="EC" id="7.4.2.11"/>
    </reaction>
</comment>
<comment type="catalytic activity">
    <reaction evidence="1">
        <text>D-methionine(out) + ATP + H2O = D-methionine(in) + ADP + phosphate + H(+)</text>
        <dbReference type="Rhea" id="RHEA:29767"/>
        <dbReference type="ChEBI" id="CHEBI:15377"/>
        <dbReference type="ChEBI" id="CHEBI:15378"/>
        <dbReference type="ChEBI" id="CHEBI:30616"/>
        <dbReference type="ChEBI" id="CHEBI:43474"/>
        <dbReference type="ChEBI" id="CHEBI:57932"/>
        <dbReference type="ChEBI" id="CHEBI:456216"/>
        <dbReference type="EC" id="7.4.2.11"/>
    </reaction>
</comment>
<comment type="subunit">
    <text evidence="1">The complex is composed of two ATP-binding proteins (MetN), two transmembrane proteins (MetI) and a solute-binding protein (MetQ).</text>
</comment>
<comment type="subcellular location">
    <subcellularLocation>
        <location evidence="1">Cell inner membrane</location>
        <topology evidence="1">Peripheral membrane protein</topology>
    </subcellularLocation>
</comment>
<comment type="similarity">
    <text evidence="1">Belongs to the ABC transporter superfamily. Methionine importer (TC 3.A.1.24) family.</text>
</comment>
<evidence type="ECO:0000255" key="1">
    <source>
        <dbReference type="HAMAP-Rule" id="MF_01719"/>
    </source>
</evidence>